<proteinExistence type="evidence at transcript level"/>
<protein>
    <recommendedName>
        <fullName>Probable adenylate kinase 7, mitochondrial</fullName>
        <ecNumber evidence="1">2.7.4.3</ecNumber>
    </recommendedName>
    <alternativeName>
        <fullName>Adenylate monophosphate kinase 7</fullName>
    </alternativeName>
</protein>
<evidence type="ECO:0000250" key="1">
    <source>
        <dbReference type="UniProtKB" id="P69441"/>
    </source>
</evidence>
<evidence type="ECO:0000255" key="2"/>
<evidence type="ECO:0000305" key="3"/>
<keyword id="KW-0067">ATP-binding</keyword>
<keyword id="KW-0418">Kinase</keyword>
<keyword id="KW-0496">Mitochondrion</keyword>
<keyword id="KW-0547">Nucleotide-binding</keyword>
<keyword id="KW-1185">Reference proteome</keyword>
<keyword id="KW-0808">Transferase</keyword>
<keyword id="KW-0809">Transit peptide</keyword>
<comment type="function">
    <text evidence="1">Catalyzes the reversible transfer of the terminal phosphate group between ATP and AMP. Plays an important role in cellular energy homeostasis and in adenine nucleotide metabolism.</text>
</comment>
<comment type="catalytic activity">
    <reaction evidence="1">
        <text>AMP + ATP = 2 ADP</text>
        <dbReference type="Rhea" id="RHEA:12973"/>
        <dbReference type="ChEBI" id="CHEBI:30616"/>
        <dbReference type="ChEBI" id="CHEBI:456215"/>
        <dbReference type="ChEBI" id="CHEBI:456216"/>
        <dbReference type="EC" id="2.7.4.3"/>
    </reaction>
</comment>
<comment type="subcellular location">
    <subcellularLocation>
        <location evidence="3">Mitochondrion</location>
    </subcellularLocation>
</comment>
<comment type="similarity">
    <text evidence="3">Belongs to the adenylate kinase family.</text>
</comment>
<organism>
    <name type="scientific">Oryza sativa subsp. japonica</name>
    <name type="common">Rice</name>
    <dbReference type="NCBI Taxonomy" id="39947"/>
    <lineage>
        <taxon>Eukaryota</taxon>
        <taxon>Viridiplantae</taxon>
        <taxon>Streptophyta</taxon>
        <taxon>Embryophyta</taxon>
        <taxon>Tracheophyta</taxon>
        <taxon>Spermatophyta</taxon>
        <taxon>Magnoliopsida</taxon>
        <taxon>Liliopsida</taxon>
        <taxon>Poales</taxon>
        <taxon>Poaceae</taxon>
        <taxon>BOP clade</taxon>
        <taxon>Oryzoideae</taxon>
        <taxon>Oryzeae</taxon>
        <taxon>Oryzinae</taxon>
        <taxon>Oryza</taxon>
        <taxon>Oryza sativa</taxon>
    </lineage>
</organism>
<reference key="1">
    <citation type="journal article" date="2005" name="Nature">
        <title>The map-based sequence of the rice genome.</title>
        <authorList>
            <consortium name="International rice genome sequencing project (IRGSP)"/>
        </authorList>
    </citation>
    <scope>NUCLEOTIDE SEQUENCE [LARGE SCALE GENOMIC DNA]</scope>
    <source>
        <strain>cv. Nipponbare</strain>
    </source>
</reference>
<reference key="2">
    <citation type="journal article" date="2008" name="Nucleic Acids Res.">
        <title>The rice annotation project database (RAP-DB): 2008 update.</title>
        <authorList>
            <consortium name="The rice annotation project (RAP)"/>
        </authorList>
    </citation>
    <scope>GENOME REANNOTATION</scope>
    <source>
        <strain>cv. Nipponbare</strain>
    </source>
</reference>
<reference key="3">
    <citation type="journal article" date="2013" name="Rice">
        <title>Improvement of the Oryza sativa Nipponbare reference genome using next generation sequence and optical map data.</title>
        <authorList>
            <person name="Kawahara Y."/>
            <person name="de la Bastide M."/>
            <person name="Hamilton J.P."/>
            <person name="Kanamori H."/>
            <person name="McCombie W.R."/>
            <person name="Ouyang S."/>
            <person name="Schwartz D.C."/>
            <person name="Tanaka T."/>
            <person name="Wu J."/>
            <person name="Zhou S."/>
            <person name="Childs K.L."/>
            <person name="Davidson R.M."/>
            <person name="Lin H."/>
            <person name="Quesada-Ocampo L."/>
            <person name="Vaillancourt B."/>
            <person name="Sakai H."/>
            <person name="Lee S.S."/>
            <person name="Kim J."/>
            <person name="Numa H."/>
            <person name="Itoh T."/>
            <person name="Buell C.R."/>
            <person name="Matsumoto T."/>
        </authorList>
    </citation>
    <scope>GENOME REANNOTATION</scope>
    <source>
        <strain>cv. Nipponbare</strain>
    </source>
</reference>
<reference key="4">
    <citation type="journal article" date="2005" name="PLoS Biol.">
        <title>The genomes of Oryza sativa: a history of duplications.</title>
        <authorList>
            <person name="Yu J."/>
            <person name="Wang J."/>
            <person name="Lin W."/>
            <person name="Li S."/>
            <person name="Li H."/>
            <person name="Zhou J."/>
            <person name="Ni P."/>
            <person name="Dong W."/>
            <person name="Hu S."/>
            <person name="Zeng C."/>
            <person name="Zhang J."/>
            <person name="Zhang Y."/>
            <person name="Li R."/>
            <person name="Xu Z."/>
            <person name="Li S."/>
            <person name="Li X."/>
            <person name="Zheng H."/>
            <person name="Cong L."/>
            <person name="Lin L."/>
            <person name="Yin J."/>
            <person name="Geng J."/>
            <person name="Li G."/>
            <person name="Shi J."/>
            <person name="Liu J."/>
            <person name="Lv H."/>
            <person name="Li J."/>
            <person name="Wang J."/>
            <person name="Deng Y."/>
            <person name="Ran L."/>
            <person name="Shi X."/>
            <person name="Wang X."/>
            <person name="Wu Q."/>
            <person name="Li C."/>
            <person name="Ren X."/>
            <person name="Wang J."/>
            <person name="Wang X."/>
            <person name="Li D."/>
            <person name="Liu D."/>
            <person name="Zhang X."/>
            <person name="Ji Z."/>
            <person name="Zhao W."/>
            <person name="Sun Y."/>
            <person name="Zhang Z."/>
            <person name="Bao J."/>
            <person name="Han Y."/>
            <person name="Dong L."/>
            <person name="Ji J."/>
            <person name="Chen P."/>
            <person name="Wu S."/>
            <person name="Liu J."/>
            <person name="Xiao Y."/>
            <person name="Bu D."/>
            <person name="Tan J."/>
            <person name="Yang L."/>
            <person name="Ye C."/>
            <person name="Zhang J."/>
            <person name="Xu J."/>
            <person name="Zhou Y."/>
            <person name="Yu Y."/>
            <person name="Zhang B."/>
            <person name="Zhuang S."/>
            <person name="Wei H."/>
            <person name="Liu B."/>
            <person name="Lei M."/>
            <person name="Yu H."/>
            <person name="Li Y."/>
            <person name="Xu H."/>
            <person name="Wei S."/>
            <person name="He X."/>
            <person name="Fang L."/>
            <person name="Zhang Z."/>
            <person name="Zhang Y."/>
            <person name="Huang X."/>
            <person name="Su Z."/>
            <person name="Tong W."/>
            <person name="Li J."/>
            <person name="Tong Z."/>
            <person name="Li S."/>
            <person name="Ye J."/>
            <person name="Wang L."/>
            <person name="Fang L."/>
            <person name="Lei T."/>
            <person name="Chen C.-S."/>
            <person name="Chen H.-C."/>
            <person name="Xu Z."/>
            <person name="Li H."/>
            <person name="Huang H."/>
            <person name="Zhang F."/>
            <person name="Xu H."/>
            <person name="Li N."/>
            <person name="Zhao C."/>
            <person name="Li S."/>
            <person name="Dong L."/>
            <person name="Huang Y."/>
            <person name="Li L."/>
            <person name="Xi Y."/>
            <person name="Qi Q."/>
            <person name="Li W."/>
            <person name="Zhang B."/>
            <person name="Hu W."/>
            <person name="Zhang Y."/>
            <person name="Tian X."/>
            <person name="Jiao Y."/>
            <person name="Liang X."/>
            <person name="Jin J."/>
            <person name="Gao L."/>
            <person name="Zheng W."/>
            <person name="Hao B."/>
            <person name="Liu S.-M."/>
            <person name="Wang W."/>
            <person name="Yuan L."/>
            <person name="Cao M."/>
            <person name="McDermott J."/>
            <person name="Samudrala R."/>
            <person name="Wang J."/>
            <person name="Wong G.K.-S."/>
            <person name="Yang H."/>
        </authorList>
    </citation>
    <scope>NUCLEOTIDE SEQUENCE [LARGE SCALE GENOMIC DNA]</scope>
    <source>
        <strain>cv. Nipponbare</strain>
    </source>
</reference>
<reference key="5">
    <citation type="journal article" date="2003" name="Science">
        <title>Collection, mapping, and annotation of over 28,000 cDNA clones from japonica rice.</title>
        <authorList>
            <consortium name="The rice full-length cDNA consortium"/>
        </authorList>
    </citation>
    <scope>NUCLEOTIDE SEQUENCE [LARGE SCALE MRNA]</scope>
    <source>
        <strain>cv. Nipponbare</strain>
    </source>
</reference>
<dbReference type="EC" id="2.7.4.3" evidence="1"/>
<dbReference type="EMBL" id="AP003925">
    <property type="protein sequence ID" value="BAD09046.1"/>
    <property type="molecule type" value="Genomic_DNA"/>
</dbReference>
<dbReference type="EMBL" id="AP008214">
    <property type="protein sequence ID" value="BAF22783.1"/>
    <property type="molecule type" value="Genomic_DNA"/>
</dbReference>
<dbReference type="EMBL" id="AP014964">
    <property type="protein sequence ID" value="BAT03575.1"/>
    <property type="molecule type" value="Genomic_DNA"/>
</dbReference>
<dbReference type="EMBL" id="CM000145">
    <property type="protein sequence ID" value="EEE67947.1"/>
    <property type="molecule type" value="Genomic_DNA"/>
</dbReference>
<dbReference type="EMBL" id="AK109749">
    <property type="protein sequence ID" value="BAG98885.1"/>
    <property type="molecule type" value="mRNA"/>
</dbReference>
<dbReference type="RefSeq" id="XP_015648647.1">
    <property type="nucleotide sequence ID" value="XM_015793161.1"/>
</dbReference>
<dbReference type="SMR" id="Q6ZJ48"/>
<dbReference type="FunCoup" id="Q6ZJ48">
    <property type="interactions" value="1413"/>
</dbReference>
<dbReference type="STRING" id="39947.Q6ZJ48"/>
<dbReference type="PaxDb" id="39947-Q6ZJ48"/>
<dbReference type="EnsemblPlants" id="Os08t0118900-01">
    <property type="protein sequence ID" value="Os08t0118900-01"/>
    <property type="gene ID" value="Os08g0118900"/>
</dbReference>
<dbReference type="Gramene" id="Os08t0118900-01">
    <property type="protein sequence ID" value="Os08t0118900-01"/>
    <property type="gene ID" value="Os08g0118900"/>
</dbReference>
<dbReference type="KEGG" id="dosa:Os08g0118900"/>
<dbReference type="eggNOG" id="KOG3078">
    <property type="taxonomic scope" value="Eukaryota"/>
</dbReference>
<dbReference type="HOGENOM" id="CLU_032354_2_0_1"/>
<dbReference type="InParanoid" id="Q6ZJ48"/>
<dbReference type="OMA" id="YTWHSQV"/>
<dbReference type="OrthoDB" id="439792at2759"/>
<dbReference type="Proteomes" id="UP000000763">
    <property type="component" value="Chromosome 8"/>
</dbReference>
<dbReference type="Proteomes" id="UP000007752">
    <property type="component" value="Chromosome 8"/>
</dbReference>
<dbReference type="Proteomes" id="UP000059680">
    <property type="component" value="Chromosome 8"/>
</dbReference>
<dbReference type="GO" id="GO:0005737">
    <property type="term" value="C:cytoplasm"/>
    <property type="evidence" value="ECO:0000318"/>
    <property type="project" value="GO_Central"/>
</dbReference>
<dbReference type="GO" id="GO:0005739">
    <property type="term" value="C:mitochondrion"/>
    <property type="evidence" value="ECO:0000318"/>
    <property type="project" value="GO_Central"/>
</dbReference>
<dbReference type="GO" id="GO:0004017">
    <property type="term" value="F:adenylate kinase activity"/>
    <property type="evidence" value="ECO:0000318"/>
    <property type="project" value="GO_Central"/>
</dbReference>
<dbReference type="GO" id="GO:0005524">
    <property type="term" value="F:ATP binding"/>
    <property type="evidence" value="ECO:0007669"/>
    <property type="project" value="UniProtKB-KW"/>
</dbReference>
<dbReference type="CDD" id="cd01428">
    <property type="entry name" value="ADK"/>
    <property type="match status" value="1"/>
</dbReference>
<dbReference type="Gene3D" id="3.40.50.300">
    <property type="entry name" value="P-loop containing nucleotide triphosphate hydrolases"/>
    <property type="match status" value="1"/>
</dbReference>
<dbReference type="InterPro" id="IPR000850">
    <property type="entry name" value="Adenylat/UMP-CMP_kin"/>
</dbReference>
<dbReference type="InterPro" id="IPR033690">
    <property type="entry name" value="Adenylat_kinase_CS"/>
</dbReference>
<dbReference type="InterPro" id="IPR027417">
    <property type="entry name" value="P-loop_NTPase"/>
</dbReference>
<dbReference type="PANTHER" id="PTHR23359">
    <property type="entry name" value="NUCLEOTIDE KINASE"/>
    <property type="match status" value="1"/>
</dbReference>
<dbReference type="Pfam" id="PF00406">
    <property type="entry name" value="ADK"/>
    <property type="match status" value="1"/>
</dbReference>
<dbReference type="PRINTS" id="PR00094">
    <property type="entry name" value="ADENYLTKNASE"/>
</dbReference>
<dbReference type="SUPFAM" id="SSF52540">
    <property type="entry name" value="P-loop containing nucleoside triphosphate hydrolases"/>
    <property type="match status" value="1"/>
</dbReference>
<dbReference type="PROSITE" id="PS00113">
    <property type="entry name" value="ADENYLATE_KINASE"/>
    <property type="match status" value="1"/>
</dbReference>
<name>KAD7_ORYSJ</name>
<sequence>MAGVLRLAGAARSPLARALAPAARRMGASAAAAMEDEAYWTEWEEEEEKARARESAPVAEMCPTGGGGGGPQWVVMGRPGPQKHAHAARLAEVLAVPYISMGTLVRQELSPASSLYKKIANSVNEGKLVPEDIIFGLLTKRLEEGYNKGETGFILDGIPRTHMQAEILDEIVDIDLVLNFKCADNCFMKRRFGGDICPHCGQLFDFSKTASSDRNPSLGSCTWPSQVQHAAVLGLEDSRMEKMRAYAEQTKLLEDYYRKQRKLMELKTSARPGETWQGLVAALHLQHLDASPTPHKLTM</sequence>
<gene>
    <name type="ordered locus">Os08g0118900</name>
    <name type="ordered locus">LOC_Os08g02540</name>
    <name type="ORF">OJ1005_B05.19</name>
    <name type="ORF">OsJ_25843</name>
</gene>
<feature type="transit peptide" description="Mitochondrion" evidence="2">
    <location>
        <begin position="1"/>
        <end position="25"/>
    </location>
</feature>
<feature type="chain" id="PRO_0000430119" description="Probable adenylate kinase 7, mitochondrial">
    <location>
        <begin position="26"/>
        <end position="299"/>
    </location>
</feature>
<feature type="region of interest" description="NMP" evidence="1">
    <location>
        <begin position="100"/>
        <end position="129"/>
    </location>
</feature>
<feature type="region of interest" description="LID" evidence="1">
    <location>
        <begin position="193"/>
        <end position="237"/>
    </location>
</feature>
<feature type="binding site" evidence="1">
    <location>
        <begin position="80"/>
        <end position="85"/>
    </location>
    <ligand>
        <name>ATP</name>
        <dbReference type="ChEBI" id="CHEBI:30616"/>
    </ligand>
</feature>
<feature type="binding site" evidence="1">
    <location>
        <position position="106"/>
    </location>
    <ligand>
        <name>AMP</name>
        <dbReference type="ChEBI" id="CHEBI:456215"/>
    </ligand>
</feature>
<feature type="binding site" evidence="1">
    <location>
        <begin position="127"/>
        <end position="129"/>
    </location>
    <ligand>
        <name>AMP</name>
        <dbReference type="ChEBI" id="CHEBI:456215"/>
    </ligand>
</feature>
<feature type="binding site" evidence="1">
    <location>
        <begin position="157"/>
        <end position="160"/>
    </location>
    <ligand>
        <name>AMP</name>
        <dbReference type="ChEBI" id="CHEBI:456215"/>
    </ligand>
</feature>
<feature type="binding site" evidence="1">
    <location>
        <position position="164"/>
    </location>
    <ligand>
        <name>AMP</name>
        <dbReference type="ChEBI" id="CHEBI:456215"/>
    </ligand>
</feature>
<feature type="binding site" evidence="1">
    <location>
        <position position="190"/>
    </location>
    <ligand>
        <name>ATP</name>
        <dbReference type="ChEBI" id="CHEBI:30616"/>
    </ligand>
</feature>
<feature type="binding site" evidence="1">
    <location>
        <begin position="203"/>
        <end position="204"/>
    </location>
    <ligand>
        <name>ATP</name>
        <dbReference type="ChEBI" id="CHEBI:30616"/>
    </ligand>
</feature>
<accession>Q6ZJ48</accession>
<accession>A0A0P0XBX1</accession>